<reference evidence="4" key="1">
    <citation type="journal article" date="2005" name="Nucleic Acids Res.">
        <title>Comparative mitochondrial genomics in zygomycetes: bacteria-like RNase P RNAs, mobile elements, and a close source of the group I intron invasion in angiosperms.</title>
        <authorList>
            <person name="Seif E."/>
            <person name="Leigh J."/>
            <person name="Liu Y."/>
            <person name="Roewer I."/>
            <person name="Forget L."/>
            <person name="Lang B.F."/>
        </authorList>
    </citation>
    <scope>NUCLEOTIDE SEQUENCE [LARGE SCALE GENOMIC DNA]</scope>
    <source>
        <strain evidence="4">18-3</strain>
    </source>
</reference>
<dbReference type="EMBL" id="AY863213">
    <property type="protein sequence ID" value="AAW49492.1"/>
    <property type="molecule type" value="Genomic_DNA"/>
</dbReference>
<dbReference type="RefSeq" id="YP_203325.1">
    <property type="nucleotide sequence ID" value="NC_006837.1"/>
</dbReference>
<dbReference type="SMR" id="Q3T4C2"/>
<dbReference type="GeneID" id="3260114"/>
<dbReference type="GO" id="GO:0005743">
    <property type="term" value="C:mitochondrial inner membrane"/>
    <property type="evidence" value="ECO:0007669"/>
    <property type="project" value="UniProtKB-SubCell"/>
</dbReference>
<dbReference type="GO" id="GO:0045259">
    <property type="term" value="C:proton-transporting ATP synthase complex"/>
    <property type="evidence" value="ECO:0007669"/>
    <property type="project" value="UniProtKB-KW"/>
</dbReference>
<dbReference type="GO" id="GO:0046933">
    <property type="term" value="F:proton-transporting ATP synthase activity, rotational mechanism"/>
    <property type="evidence" value="ECO:0007669"/>
    <property type="project" value="TreeGrafter"/>
</dbReference>
<dbReference type="CDD" id="cd00310">
    <property type="entry name" value="ATP-synt_Fo_a_6"/>
    <property type="match status" value="1"/>
</dbReference>
<dbReference type="Gene3D" id="1.20.120.220">
    <property type="entry name" value="ATP synthase, F0 complex, subunit A"/>
    <property type="match status" value="1"/>
</dbReference>
<dbReference type="HAMAP" id="MF_01393">
    <property type="entry name" value="ATP_synth_a_bact"/>
    <property type="match status" value="1"/>
</dbReference>
<dbReference type="InterPro" id="IPR000568">
    <property type="entry name" value="ATP_synth_F0_asu"/>
</dbReference>
<dbReference type="InterPro" id="IPR023011">
    <property type="entry name" value="ATP_synth_F0_asu_AS"/>
</dbReference>
<dbReference type="InterPro" id="IPR045083">
    <property type="entry name" value="ATP_synth_F0_asu_bact/mt"/>
</dbReference>
<dbReference type="InterPro" id="IPR035908">
    <property type="entry name" value="F0_ATP_A_sf"/>
</dbReference>
<dbReference type="NCBIfam" id="TIGR01131">
    <property type="entry name" value="ATP_synt_6_or_A"/>
    <property type="match status" value="1"/>
</dbReference>
<dbReference type="PANTHER" id="PTHR11410">
    <property type="entry name" value="ATP SYNTHASE SUBUNIT A"/>
    <property type="match status" value="1"/>
</dbReference>
<dbReference type="PANTHER" id="PTHR11410:SF0">
    <property type="entry name" value="ATP SYNTHASE SUBUNIT A"/>
    <property type="match status" value="1"/>
</dbReference>
<dbReference type="Pfam" id="PF00119">
    <property type="entry name" value="ATP-synt_A"/>
    <property type="match status" value="1"/>
</dbReference>
<dbReference type="PRINTS" id="PR00123">
    <property type="entry name" value="ATPASEA"/>
</dbReference>
<dbReference type="SUPFAM" id="SSF81336">
    <property type="entry name" value="F1F0 ATP synthase subunit A"/>
    <property type="match status" value="1"/>
</dbReference>
<dbReference type="PROSITE" id="PS00449">
    <property type="entry name" value="ATPASE_A"/>
    <property type="match status" value="1"/>
</dbReference>
<keyword id="KW-0066">ATP synthesis</keyword>
<keyword id="KW-0138">CF(0)</keyword>
<keyword id="KW-0375">Hydrogen ion transport</keyword>
<keyword id="KW-0406">Ion transport</keyword>
<keyword id="KW-0472">Membrane</keyword>
<keyword id="KW-0496">Mitochondrion</keyword>
<keyword id="KW-0999">Mitochondrion inner membrane</keyword>
<keyword id="KW-0812">Transmembrane</keyword>
<keyword id="KW-1133">Transmembrane helix</keyword>
<keyword id="KW-0813">Transport</keyword>
<organism>
    <name type="scientific">Zancudomyces culisetae</name>
    <name type="common">Gut fungus</name>
    <name type="synonym">Smittium culisetae</name>
    <dbReference type="NCBI Taxonomy" id="1213189"/>
    <lineage>
        <taxon>Eukaryota</taxon>
        <taxon>Fungi</taxon>
        <taxon>Fungi incertae sedis</taxon>
        <taxon>Zoopagomycota</taxon>
        <taxon>Kickxellomycotina</taxon>
        <taxon>Harpellomycetes</taxon>
        <taxon>Harpellales</taxon>
        <taxon>Legeriomycetaceae</taxon>
        <taxon>Zancudomyces</taxon>
    </lineage>
</organism>
<comment type="function">
    <text evidence="3">Mitochondrial membrane ATP synthase (F(1)F(0) ATP synthase or Complex V) produces ATP from ADP in the presence of a proton gradient across the membrane which is generated by electron transport complexes of the respiratory chain. F-type ATPases consist of two structural domains, F(1) - containing the extramembraneous catalytic core and F(0) - containing the membrane proton channel, linked together by a central stalk and a peripheral stalk. During catalysis, ATP synthesis in the catalytic domain of F(1) is coupled via a rotary mechanism of the central stalk subunits to proton translocation. Key component of the proton channel; it may play a direct role in the translocation of protons across the membrane.</text>
</comment>
<comment type="subunit">
    <text evidence="3">F-type ATPases have 2 components, CF(1) - the catalytic core - and CF(0) - the membrane proton channel. CF(1) has five subunits: alpha(3), beta(3), gamma(1), delta(1), epsilon(1). CF(0) has three main subunits: a, b and c.</text>
</comment>
<comment type="subcellular location">
    <subcellularLocation>
        <location evidence="3">Mitochondrion inner membrane</location>
        <topology evidence="3">Multi-pass membrane protein</topology>
    </subcellularLocation>
</comment>
<comment type="similarity">
    <text evidence="2">Belongs to the ATPase A chain family.</text>
</comment>
<accession>Q3T4C2</accession>
<gene>
    <name evidence="4" type="primary">atp6</name>
</gene>
<protein>
    <recommendedName>
        <fullName evidence="1">ATP synthase subunit a</fullName>
    </recommendedName>
    <alternativeName>
        <fullName evidence="1">ATP synthase subunit 6</fullName>
    </alternativeName>
    <alternativeName>
        <fullName evidence="1">F-ATPase protein 6</fullName>
    </alternativeName>
</protein>
<evidence type="ECO:0000250" key="1">
    <source>
        <dbReference type="UniProtKB" id="Q03671"/>
    </source>
</evidence>
<evidence type="ECO:0000255" key="2"/>
<evidence type="ECO:0000305" key="3"/>
<evidence type="ECO:0000312" key="4">
    <source>
        <dbReference type="EMBL" id="AAW49492.1"/>
    </source>
</evidence>
<sequence>MLYNPLEQFTVNKIISLYTVYYSMSLTNSSLYFIIAAIISFFIFKYSANIPYVSLINKNNYSILTESLYKTILKMVKEQIGDKYTIYMPLIFSLFIIILVSNLVGLIPYGFSPTALFALPLGLSVTIIISVTVIGFVKYHLKYFSVLLPSGTPLGLVPLLLVVELLSYIARAFSLGIRLAANITSGHILLNIISGFLFKTSGIALLFVIIPFTLFIALTGLELIVAILQAYVWSILTCIYIKDSLILH</sequence>
<feature type="propeptide" id="PRO_0000391440" description="Removed in mature form" evidence="1">
    <location>
        <begin position="1"/>
        <end position="3"/>
    </location>
</feature>
<feature type="chain" id="PRO_0000391441" description="ATP synthase subunit a">
    <location>
        <begin position="4"/>
        <end position="248"/>
    </location>
</feature>
<feature type="transmembrane region" description="Helical" evidence="2">
    <location>
        <begin position="24"/>
        <end position="44"/>
    </location>
</feature>
<feature type="transmembrane region" description="Helical" evidence="2">
    <location>
        <begin position="86"/>
        <end position="106"/>
    </location>
</feature>
<feature type="transmembrane region" description="Helical" evidence="2">
    <location>
        <begin position="117"/>
        <end position="137"/>
    </location>
</feature>
<feature type="transmembrane region" description="Helical" evidence="2">
    <location>
        <begin position="146"/>
        <end position="166"/>
    </location>
</feature>
<feature type="transmembrane region" description="Helical" evidence="2">
    <location>
        <begin position="183"/>
        <end position="203"/>
    </location>
</feature>
<feature type="transmembrane region" description="Helical" evidence="2">
    <location>
        <begin position="205"/>
        <end position="225"/>
    </location>
</feature>
<feature type="transmembrane region" description="Helical" evidence="2">
    <location>
        <begin position="227"/>
        <end position="247"/>
    </location>
</feature>
<proteinExistence type="inferred from homology"/>
<name>ATP6_ZANCU</name>
<geneLocation type="mitochondrion" evidence="4"/>